<name>TX31_ANDCR</name>
<accession>P0C298</accession>
<protein>
    <recommendedName>
        <fullName>Toxin Acra III-1</fullName>
    </recommendedName>
</protein>
<comment type="function">
    <text evidence="1">Binds to sodium channels (Nav) and affects the channel activation process.</text>
</comment>
<comment type="subcellular location">
    <subcellularLocation>
        <location evidence="1">Secreted</location>
    </subcellularLocation>
</comment>
<comment type="tissue specificity">
    <text>Expressed by the venom gland.</text>
</comment>
<comment type="domain">
    <text evidence="3">Has the structural arrangement of an alpha-helix connected to antiparallel beta-sheets by disulfide bonds (CS-alpha/beta).</text>
</comment>
<comment type="similarity">
    <text evidence="3">Belongs to the long (3 C-C) scorpion toxin superfamily. Sodium channel inhibitor family. Beta subfamily.</text>
</comment>
<reference key="1">
    <citation type="journal article" date="2006" name="Toxicon">
        <title>Characterization of venom components from the scorpion Androctonus crassicauda of Turkey: peptides and genes.</title>
        <authorList>
            <person name="Caliskan F."/>
            <person name="Garcia B.I."/>
            <person name="Coronas F.I.V."/>
            <person name="Batista C.V.F."/>
            <person name="Zamudio F.Z."/>
            <person name="Possani L.D."/>
        </authorList>
    </citation>
    <scope>NUCLEOTIDE SEQUENCE [MRNA]</scope>
    <source>
        <tissue>Venom gland</tissue>
    </source>
</reference>
<dbReference type="SMR" id="P0C298"/>
<dbReference type="GO" id="GO:0005576">
    <property type="term" value="C:extracellular region"/>
    <property type="evidence" value="ECO:0007669"/>
    <property type="project" value="UniProtKB-SubCell"/>
</dbReference>
<dbReference type="GO" id="GO:0019871">
    <property type="term" value="F:sodium channel inhibitor activity"/>
    <property type="evidence" value="ECO:0007669"/>
    <property type="project" value="InterPro"/>
</dbReference>
<dbReference type="GO" id="GO:0090729">
    <property type="term" value="F:toxin activity"/>
    <property type="evidence" value="ECO:0007669"/>
    <property type="project" value="UniProtKB-KW"/>
</dbReference>
<dbReference type="CDD" id="cd23106">
    <property type="entry name" value="neurotoxins_LC_scorpion"/>
    <property type="match status" value="1"/>
</dbReference>
<dbReference type="Gene3D" id="3.30.30.10">
    <property type="entry name" value="Knottin, scorpion toxin-like"/>
    <property type="match status" value="1"/>
</dbReference>
<dbReference type="InterPro" id="IPR044062">
    <property type="entry name" value="LCN-type_CS_alpha_beta_dom"/>
</dbReference>
<dbReference type="InterPro" id="IPR036574">
    <property type="entry name" value="Scorpion_toxin-like_sf"/>
</dbReference>
<dbReference type="InterPro" id="IPR002061">
    <property type="entry name" value="Scorpion_toxinL/defensin"/>
</dbReference>
<dbReference type="Pfam" id="PF00537">
    <property type="entry name" value="Toxin_3"/>
    <property type="match status" value="1"/>
</dbReference>
<dbReference type="SUPFAM" id="SSF57095">
    <property type="entry name" value="Scorpion toxin-like"/>
    <property type="match status" value="1"/>
</dbReference>
<dbReference type="PROSITE" id="PS51863">
    <property type="entry name" value="LCN_CSAB"/>
    <property type="match status" value="1"/>
</dbReference>
<sequence length="76" mass="8810">ADVPGNYPLDTRGYSYYCTKLGENEFCKKICKIHGVSYGYCYNSYCWCEYLEGKDINIWDAVKNHCTNTNLYPNGK</sequence>
<evidence type="ECO:0000250" key="1"/>
<evidence type="ECO:0000255" key="2">
    <source>
        <dbReference type="PROSITE-ProRule" id="PRU01210"/>
    </source>
</evidence>
<evidence type="ECO:0000305" key="3"/>
<keyword id="KW-1015">Disulfide bond</keyword>
<keyword id="KW-0872">Ion channel impairing toxin</keyword>
<keyword id="KW-0528">Neurotoxin</keyword>
<keyword id="KW-0964">Secreted</keyword>
<keyword id="KW-0800">Toxin</keyword>
<keyword id="KW-0738">Voltage-gated sodium channel impairing toxin</keyword>
<proteinExistence type="evidence at transcript level"/>
<organism>
    <name type="scientific">Androctonus crassicauda</name>
    <name type="common">Arabian fat-tailed scorpion</name>
    <dbReference type="NCBI Taxonomy" id="122909"/>
    <lineage>
        <taxon>Eukaryota</taxon>
        <taxon>Metazoa</taxon>
        <taxon>Ecdysozoa</taxon>
        <taxon>Arthropoda</taxon>
        <taxon>Chelicerata</taxon>
        <taxon>Arachnida</taxon>
        <taxon>Scorpiones</taxon>
        <taxon>Buthida</taxon>
        <taxon>Buthoidea</taxon>
        <taxon>Buthidae</taxon>
        <taxon>Androctonus</taxon>
    </lineage>
</organism>
<feature type="chain" id="PRO_0000271325" description="Toxin Acra III-1">
    <location>
        <begin position="1"/>
        <end position="76"/>
    </location>
</feature>
<feature type="domain" description="LCN-type CS-alpha/beta" evidence="2">
    <location>
        <begin position="4"/>
        <end position="67"/>
    </location>
</feature>
<feature type="disulfide bond" evidence="2">
    <location>
        <begin position="18"/>
        <end position="41"/>
    </location>
</feature>
<feature type="disulfide bond" evidence="2">
    <location>
        <begin position="27"/>
        <end position="46"/>
    </location>
</feature>
<feature type="disulfide bond" evidence="2">
    <location>
        <begin position="31"/>
        <end position="48"/>
    </location>
</feature>